<keyword id="KW-0249">Electron transport</keyword>
<keyword id="KW-0349">Heme</keyword>
<keyword id="KW-0408">Iron</keyword>
<keyword id="KW-0472">Membrane</keyword>
<keyword id="KW-0479">Metal-binding</keyword>
<keyword id="KW-0496">Mitochondrion</keyword>
<keyword id="KW-0999">Mitochondrion inner membrane</keyword>
<keyword id="KW-0679">Respiratory chain</keyword>
<keyword id="KW-0812">Transmembrane</keyword>
<keyword id="KW-1133">Transmembrane helix</keyword>
<keyword id="KW-0813">Transport</keyword>
<keyword id="KW-0830">Ubiquinone</keyword>
<protein>
    <recommendedName>
        <fullName>Cytochrome b</fullName>
    </recommendedName>
    <alternativeName>
        <fullName>Complex III subunit 3</fullName>
    </alternativeName>
    <alternativeName>
        <fullName>Complex III subunit III</fullName>
    </alternativeName>
    <alternativeName>
        <fullName>Cytochrome b-c1 complex subunit 3</fullName>
    </alternativeName>
    <alternativeName>
        <fullName>Ubiquinol-cytochrome-c reductase complex cytochrome b subunit</fullName>
    </alternativeName>
</protein>
<reference key="1">
    <citation type="journal article" date="1992" name="Proc. R. Soc. B">
        <title>Phylogenetic relationships of the thylacine (Mammalia: Thylacinidae) among dasyuroid marsupials: evidence from cytochrome b DNA sequences.</title>
        <authorList>
            <person name="Krajewski C."/>
            <person name="Driskell A.C."/>
            <person name="Baverstock P.R."/>
            <person name="Braun M.J."/>
        </authorList>
    </citation>
    <scope>NUCLEOTIDE SEQUENCE [GENOMIC DNA]</scope>
</reference>
<gene>
    <name type="primary">MT-CYB</name>
    <name type="synonym">COB</name>
    <name type="synonym">CYTB</name>
    <name type="synonym">MTCYB</name>
</gene>
<accession>O03522</accession>
<accession>Q34332</accession>
<dbReference type="EMBL" id="M99461">
    <property type="protein sequence ID" value="AAB61681.1"/>
    <property type="molecule type" value="Genomic_DNA"/>
</dbReference>
<dbReference type="SMR" id="O03522"/>
<dbReference type="GO" id="GO:0005743">
    <property type="term" value="C:mitochondrial inner membrane"/>
    <property type="evidence" value="ECO:0007669"/>
    <property type="project" value="UniProtKB-SubCell"/>
</dbReference>
<dbReference type="GO" id="GO:0045275">
    <property type="term" value="C:respiratory chain complex III"/>
    <property type="evidence" value="ECO:0007669"/>
    <property type="project" value="InterPro"/>
</dbReference>
<dbReference type="GO" id="GO:0046872">
    <property type="term" value="F:metal ion binding"/>
    <property type="evidence" value="ECO:0007669"/>
    <property type="project" value="UniProtKB-KW"/>
</dbReference>
<dbReference type="GO" id="GO:0008121">
    <property type="term" value="F:ubiquinol-cytochrome-c reductase activity"/>
    <property type="evidence" value="ECO:0007669"/>
    <property type="project" value="InterPro"/>
</dbReference>
<dbReference type="GO" id="GO:0006122">
    <property type="term" value="P:mitochondrial electron transport, ubiquinol to cytochrome c"/>
    <property type="evidence" value="ECO:0007669"/>
    <property type="project" value="TreeGrafter"/>
</dbReference>
<dbReference type="CDD" id="cd00290">
    <property type="entry name" value="cytochrome_b_C"/>
    <property type="match status" value="1"/>
</dbReference>
<dbReference type="CDD" id="cd00284">
    <property type="entry name" value="Cytochrome_b_N"/>
    <property type="match status" value="1"/>
</dbReference>
<dbReference type="FunFam" id="1.20.810.10:FF:000002">
    <property type="entry name" value="Cytochrome b"/>
    <property type="match status" value="1"/>
</dbReference>
<dbReference type="Gene3D" id="1.20.810.10">
    <property type="entry name" value="Cytochrome Bc1 Complex, Chain C"/>
    <property type="match status" value="1"/>
</dbReference>
<dbReference type="InterPro" id="IPR005798">
    <property type="entry name" value="Cyt_b/b6_C"/>
</dbReference>
<dbReference type="InterPro" id="IPR036150">
    <property type="entry name" value="Cyt_b/b6_C_sf"/>
</dbReference>
<dbReference type="InterPro" id="IPR005797">
    <property type="entry name" value="Cyt_b/b6_N"/>
</dbReference>
<dbReference type="InterPro" id="IPR027387">
    <property type="entry name" value="Cytb/b6-like_sf"/>
</dbReference>
<dbReference type="InterPro" id="IPR030689">
    <property type="entry name" value="Cytochrome_b"/>
</dbReference>
<dbReference type="InterPro" id="IPR048260">
    <property type="entry name" value="Cytochrome_b_C_euk/bac"/>
</dbReference>
<dbReference type="InterPro" id="IPR048259">
    <property type="entry name" value="Cytochrome_b_N_euk/bac"/>
</dbReference>
<dbReference type="InterPro" id="IPR016174">
    <property type="entry name" value="Di-haem_cyt_TM"/>
</dbReference>
<dbReference type="PANTHER" id="PTHR19271">
    <property type="entry name" value="CYTOCHROME B"/>
    <property type="match status" value="1"/>
</dbReference>
<dbReference type="PANTHER" id="PTHR19271:SF16">
    <property type="entry name" value="CYTOCHROME B"/>
    <property type="match status" value="1"/>
</dbReference>
<dbReference type="Pfam" id="PF00032">
    <property type="entry name" value="Cytochrom_B_C"/>
    <property type="match status" value="1"/>
</dbReference>
<dbReference type="Pfam" id="PF00033">
    <property type="entry name" value="Cytochrome_B"/>
    <property type="match status" value="1"/>
</dbReference>
<dbReference type="PIRSF" id="PIRSF038885">
    <property type="entry name" value="COB"/>
    <property type="match status" value="1"/>
</dbReference>
<dbReference type="SUPFAM" id="SSF81648">
    <property type="entry name" value="a domain/subunit of cytochrome bc1 complex (Ubiquinol-cytochrome c reductase)"/>
    <property type="match status" value="1"/>
</dbReference>
<dbReference type="SUPFAM" id="SSF81342">
    <property type="entry name" value="Transmembrane di-heme cytochromes"/>
    <property type="match status" value="1"/>
</dbReference>
<dbReference type="PROSITE" id="PS51003">
    <property type="entry name" value="CYTB_CTER"/>
    <property type="match status" value="1"/>
</dbReference>
<dbReference type="PROSITE" id="PS51002">
    <property type="entry name" value="CYTB_NTER"/>
    <property type="match status" value="1"/>
</dbReference>
<organism>
    <name type="scientific">Dasyurus maculatus</name>
    <name type="common">Tiger quoll</name>
    <dbReference type="NCBI Taxonomy" id="9281"/>
    <lineage>
        <taxon>Eukaryota</taxon>
        <taxon>Metazoa</taxon>
        <taxon>Chordata</taxon>
        <taxon>Craniata</taxon>
        <taxon>Vertebrata</taxon>
        <taxon>Euteleostomi</taxon>
        <taxon>Mammalia</taxon>
        <taxon>Metatheria</taxon>
        <taxon>Dasyuromorphia</taxon>
        <taxon>Dasyuridae</taxon>
        <taxon>Dasyurus</taxon>
    </lineage>
</organism>
<proteinExistence type="inferred from homology"/>
<name>CYB_DASMA</name>
<comment type="function">
    <text evidence="2">Component of the ubiquinol-cytochrome c reductase complex (complex III or cytochrome b-c1 complex) that is part of the mitochondrial respiratory chain. The b-c1 complex mediates electron transfer from ubiquinol to cytochrome c. Contributes to the generation of a proton gradient across the mitochondrial membrane that is then used for ATP synthesis.</text>
</comment>
<comment type="cofactor">
    <cofactor evidence="2">
        <name>heme b</name>
        <dbReference type="ChEBI" id="CHEBI:60344"/>
    </cofactor>
    <text evidence="2">Binds 2 heme b groups non-covalently.</text>
</comment>
<comment type="subunit">
    <text evidence="2">The cytochrome bc1 complex contains 11 subunits: 3 respiratory subunits (MT-CYB, CYC1 and UQCRFS1), 2 core proteins (UQCRC1 and UQCRC2) and 6 low-molecular weight proteins (UQCRH/QCR6, UQCRB/QCR7, UQCRQ/QCR8, UQCR10/QCR9, UQCR11/QCR10 and a cleavage product of UQCRFS1). This cytochrome bc1 complex then forms a dimer.</text>
</comment>
<comment type="subcellular location">
    <subcellularLocation>
        <location evidence="2">Mitochondrion inner membrane</location>
        <topology evidence="2">Multi-pass membrane protein</topology>
    </subcellularLocation>
</comment>
<comment type="miscellaneous">
    <text evidence="1">Heme 1 (or BL or b562) is low-potential and absorbs at about 562 nm, and heme 2 (or BH or b566) is high-potential and absorbs at about 566 nm.</text>
</comment>
<comment type="similarity">
    <text evidence="3 4">Belongs to the cytochrome b family.</text>
</comment>
<comment type="caution">
    <text evidence="5">An expected heme iron ligand His residue was not found at position 83 in this sequence.</text>
</comment>
<comment type="caution">
    <text evidence="2">The full-length protein contains only eight transmembrane helices, not nine as predicted by bioinformatics tools.</text>
</comment>
<evidence type="ECO:0000250" key="1"/>
<evidence type="ECO:0000250" key="2">
    <source>
        <dbReference type="UniProtKB" id="P00157"/>
    </source>
</evidence>
<evidence type="ECO:0000255" key="3">
    <source>
        <dbReference type="PROSITE-ProRule" id="PRU00967"/>
    </source>
</evidence>
<evidence type="ECO:0000255" key="4">
    <source>
        <dbReference type="PROSITE-ProRule" id="PRU00968"/>
    </source>
</evidence>
<evidence type="ECO:0000305" key="5"/>
<sequence>MINMRKTHPLLKIINHSFIDLPAPSNISAWWNFGSLLGVCLMIQILTGLFLAMHYTSDTLTAFSSVAHICRDVNHGWLLRNLQANGASMFFMCLFLHVGRGIYYGSYLYKETWNIGVILLLTVMATAFVGYVLPWGQMSFWGATVITNLLSAIPYIGTTLAEWIWGGFAVDKATLTRFFAFHFILPFIIMALAVVHLLFLHETGSNNPSGINPDSDKIPFHPYYTIKDALGLMLLLLMLLLLALFSPDLLGDPDNFSPANPLNTPPHIKPEWYFLFAYAILRSIPNKLGGVLALLASILILLIIPLLHTANQRSMMFRPISQTLFWILTANLITLTWIGGQPVEQPFIIIGQLASTLYFPLILILMPSAGLLENYMLEPKW</sequence>
<feature type="chain" id="PRO_0000060867" description="Cytochrome b">
    <location>
        <begin position="1"/>
        <end position="381"/>
    </location>
</feature>
<feature type="transmembrane region" description="Helical" evidence="2">
    <location>
        <begin position="33"/>
        <end position="53"/>
    </location>
</feature>
<feature type="transmembrane region" description="Helical" evidence="2">
    <location>
        <begin position="77"/>
        <end position="98"/>
    </location>
</feature>
<feature type="transmembrane region" description="Helical" evidence="2">
    <location>
        <begin position="113"/>
        <end position="133"/>
    </location>
</feature>
<feature type="transmembrane region" description="Helical" evidence="2">
    <location>
        <begin position="178"/>
        <end position="198"/>
    </location>
</feature>
<feature type="transmembrane region" description="Helical" evidence="2">
    <location>
        <begin position="226"/>
        <end position="246"/>
    </location>
</feature>
<feature type="transmembrane region" description="Helical" evidence="2">
    <location>
        <begin position="288"/>
        <end position="308"/>
    </location>
</feature>
<feature type="transmembrane region" description="Helical" evidence="2">
    <location>
        <begin position="320"/>
        <end position="340"/>
    </location>
</feature>
<feature type="transmembrane region" description="Helical" evidence="2">
    <location>
        <begin position="347"/>
        <end position="367"/>
    </location>
</feature>
<feature type="binding site" description="axial binding residue" evidence="2">
    <location>
        <position position="97"/>
    </location>
    <ligand>
        <name>heme b</name>
        <dbReference type="ChEBI" id="CHEBI:60344"/>
        <label>b566</label>
    </ligand>
    <ligandPart>
        <name>Fe</name>
        <dbReference type="ChEBI" id="CHEBI:18248"/>
    </ligandPart>
</feature>
<feature type="binding site" description="axial binding residue" evidence="2">
    <location>
        <position position="182"/>
    </location>
    <ligand>
        <name>heme b</name>
        <dbReference type="ChEBI" id="CHEBI:60344"/>
        <label>b562</label>
    </ligand>
    <ligandPart>
        <name>Fe</name>
        <dbReference type="ChEBI" id="CHEBI:18248"/>
    </ligandPart>
</feature>
<feature type="binding site" description="axial binding residue" evidence="2">
    <location>
        <position position="196"/>
    </location>
    <ligand>
        <name>heme b</name>
        <dbReference type="ChEBI" id="CHEBI:60344"/>
        <label>b566</label>
    </ligand>
    <ligandPart>
        <name>Fe</name>
        <dbReference type="ChEBI" id="CHEBI:18248"/>
    </ligandPart>
</feature>
<feature type="binding site" evidence="2">
    <location>
        <position position="201"/>
    </location>
    <ligand>
        <name>a ubiquinone</name>
        <dbReference type="ChEBI" id="CHEBI:16389"/>
    </ligand>
</feature>
<geneLocation type="mitochondrion"/>